<proteinExistence type="inferred from homology"/>
<feature type="chain" id="PRO_1000055965" description="Large ribosomal subunit protein bL17">
    <location>
        <begin position="1"/>
        <end position="128"/>
    </location>
</feature>
<name>RL17_STRPG</name>
<comment type="subunit">
    <text evidence="1">Part of the 50S ribosomal subunit. Contacts protein L32.</text>
</comment>
<comment type="similarity">
    <text evidence="1">Belongs to the bacterial ribosomal protein bL17 family.</text>
</comment>
<keyword id="KW-0687">Ribonucleoprotein</keyword>
<keyword id="KW-0689">Ribosomal protein</keyword>
<dbReference type="EMBL" id="AM295007">
    <property type="protein sequence ID" value="CAM29413.1"/>
    <property type="molecule type" value="Genomic_DNA"/>
</dbReference>
<dbReference type="RefSeq" id="WP_011888530.1">
    <property type="nucleotide sequence ID" value="NC_009332.1"/>
</dbReference>
<dbReference type="SMR" id="A2RC41"/>
<dbReference type="KEGG" id="spf:SpyM50070"/>
<dbReference type="HOGENOM" id="CLU_074407_2_2_9"/>
<dbReference type="GO" id="GO:0022625">
    <property type="term" value="C:cytosolic large ribosomal subunit"/>
    <property type="evidence" value="ECO:0007669"/>
    <property type="project" value="TreeGrafter"/>
</dbReference>
<dbReference type="GO" id="GO:0003735">
    <property type="term" value="F:structural constituent of ribosome"/>
    <property type="evidence" value="ECO:0007669"/>
    <property type="project" value="InterPro"/>
</dbReference>
<dbReference type="GO" id="GO:0006412">
    <property type="term" value="P:translation"/>
    <property type="evidence" value="ECO:0007669"/>
    <property type="project" value="UniProtKB-UniRule"/>
</dbReference>
<dbReference type="FunFam" id="3.90.1030.10:FF:000002">
    <property type="entry name" value="50S ribosomal protein L17"/>
    <property type="match status" value="1"/>
</dbReference>
<dbReference type="Gene3D" id="3.90.1030.10">
    <property type="entry name" value="Ribosomal protein L17"/>
    <property type="match status" value="1"/>
</dbReference>
<dbReference type="HAMAP" id="MF_01368">
    <property type="entry name" value="Ribosomal_bL17"/>
    <property type="match status" value="1"/>
</dbReference>
<dbReference type="InterPro" id="IPR000456">
    <property type="entry name" value="Ribosomal_bL17"/>
</dbReference>
<dbReference type="InterPro" id="IPR047859">
    <property type="entry name" value="Ribosomal_bL17_CS"/>
</dbReference>
<dbReference type="InterPro" id="IPR036373">
    <property type="entry name" value="Ribosomal_bL17_sf"/>
</dbReference>
<dbReference type="NCBIfam" id="TIGR00059">
    <property type="entry name" value="L17"/>
    <property type="match status" value="1"/>
</dbReference>
<dbReference type="PANTHER" id="PTHR14413:SF16">
    <property type="entry name" value="LARGE RIBOSOMAL SUBUNIT PROTEIN BL17M"/>
    <property type="match status" value="1"/>
</dbReference>
<dbReference type="PANTHER" id="PTHR14413">
    <property type="entry name" value="RIBOSOMAL PROTEIN L17"/>
    <property type="match status" value="1"/>
</dbReference>
<dbReference type="Pfam" id="PF01196">
    <property type="entry name" value="Ribosomal_L17"/>
    <property type="match status" value="1"/>
</dbReference>
<dbReference type="SUPFAM" id="SSF64263">
    <property type="entry name" value="Prokaryotic ribosomal protein L17"/>
    <property type="match status" value="1"/>
</dbReference>
<dbReference type="PROSITE" id="PS01167">
    <property type="entry name" value="RIBOSOMAL_L17"/>
    <property type="match status" value="1"/>
</dbReference>
<organism>
    <name type="scientific">Streptococcus pyogenes serotype M5 (strain Manfredo)</name>
    <dbReference type="NCBI Taxonomy" id="160491"/>
    <lineage>
        <taxon>Bacteria</taxon>
        <taxon>Bacillati</taxon>
        <taxon>Bacillota</taxon>
        <taxon>Bacilli</taxon>
        <taxon>Lactobacillales</taxon>
        <taxon>Streptococcaceae</taxon>
        <taxon>Streptococcus</taxon>
    </lineage>
</organism>
<protein>
    <recommendedName>
        <fullName evidence="1">Large ribosomal subunit protein bL17</fullName>
    </recommendedName>
    <alternativeName>
        <fullName evidence="2">50S ribosomal protein L17</fullName>
    </alternativeName>
</protein>
<evidence type="ECO:0000255" key="1">
    <source>
        <dbReference type="HAMAP-Rule" id="MF_01368"/>
    </source>
</evidence>
<evidence type="ECO:0000305" key="2"/>
<reference key="1">
    <citation type="journal article" date="2007" name="J. Bacteriol.">
        <title>Complete genome of acute rheumatic fever-associated serotype M5 Streptococcus pyogenes strain Manfredo.</title>
        <authorList>
            <person name="Holden M.T.G."/>
            <person name="Scott A."/>
            <person name="Cherevach I."/>
            <person name="Chillingworth T."/>
            <person name="Churcher C."/>
            <person name="Cronin A."/>
            <person name="Dowd L."/>
            <person name="Feltwell T."/>
            <person name="Hamlin N."/>
            <person name="Holroyd S."/>
            <person name="Jagels K."/>
            <person name="Moule S."/>
            <person name="Mungall K."/>
            <person name="Quail M.A."/>
            <person name="Price C."/>
            <person name="Rabbinowitsch E."/>
            <person name="Sharp S."/>
            <person name="Skelton J."/>
            <person name="Whitehead S."/>
            <person name="Barrell B.G."/>
            <person name="Kehoe M."/>
            <person name="Parkhill J."/>
        </authorList>
    </citation>
    <scope>NUCLEOTIDE SEQUENCE [LARGE SCALE GENOMIC DNA]</scope>
    <source>
        <strain>Manfredo</strain>
    </source>
</reference>
<sequence length="128" mass="14550">MAYRKLGRTSSQRKAMLRDLTTDLLINESIVTTEARAKEIRKTVEKMITLGKRGDLHARRQAAAYVRNEIASENYDEVTDKYTSTTALQKLFSEIAPRYAERNGGYTRILKTEPRRGDAAPMAIIELV</sequence>
<accession>A2RC41</accession>
<gene>
    <name evidence="1" type="primary">rplQ</name>
    <name type="ordered locus">SpyM50070</name>
</gene>